<keyword id="KW-0002">3D-structure</keyword>
<keyword id="KW-0175">Coiled coil</keyword>
<keyword id="KW-0507">mRNA processing</keyword>
<keyword id="KW-0539">Nucleus</keyword>
<keyword id="KW-1185">Reference proteome</keyword>
<keyword id="KW-0677">Repeat</keyword>
<keyword id="KW-0694">RNA-binding</keyword>
<accession>Q8MSU4</accession>
<accession>Q9VNH4</accession>
<protein>
    <recommendedName>
        <fullName evidence="11">Symplekin</fullName>
    </recommendedName>
</protein>
<comment type="function">
    <text evidence="3 4 6">Component of a protein complex required for cotranscriptional processing of 3'-ends of polyadenylated and histone pre-mRNA (PubMed:18042462, PubMed:19450530). Involved in germline stem cell transit amplification, differentiation and mitosis-to-meiosis transition (PubMed:28190776).</text>
</comment>
<comment type="subunit">
    <text evidence="4">Interacts with Cpsf73 and Cpsf100 forming a core cleavage factor required for both polyadenylated and histone mRNA processing. Interacts with Slbp and Lsm11.</text>
</comment>
<comment type="subcellular location">
    <subcellularLocation>
        <location evidence="3">Nucleus</location>
    </subcellularLocation>
    <text evidence="3">Concentrates in the histone locus body.</text>
</comment>
<comment type="developmental stage">
    <text evidence="7">In embryos (at protein level).</text>
</comment>
<comment type="domain">
    <text evidence="5">The HEAT repeats have been determined based on 3D-structure analysis and are not detected by sequence-based prediction programs.</text>
</comment>
<comment type="disruption phenotype">
    <text evidence="6">RNAi-mediated knockdown results in overproliferation of testicular cystocytes undergoing transit amplification leading to increased incidence of spermatogonial tumors.</text>
</comment>
<comment type="similarity">
    <text evidence="8">Belongs to the Symplekin family.</text>
</comment>
<proteinExistence type="evidence at protein level"/>
<sequence>MDSIIGRSQFVSETANLFTDEKTATARAKVVDWCNELVIASPSTKCELLAKVQETVLGSCAELAEEFLESVLSLAHDSNMEVRKQVVAFVEQVCKVKVELLPHVINVVSMLLRDNSAQVIKRVIQACGSIYKNGLQYLCSLMEPGDSAEQAWNILSLIKAQILDMIDNENDGIRTNAIKFLEGVVVLQSFADEDSLKRDGDFSLADVPDHCTLFRREKLQEEGNNILDILLQFHGTTHISSVNLIACTSSLCTIAKMRPIFMGAVVEAFKQLNANLPPTLTDSQVSSVRKSLKMQLQTLLKNRGAFEFASTIRGMLVDLGSSTNEIQKLIPKMDKQEMARRQKRILENAAQSLAKRARLACEQQDQQQREMELDTEELERQKQKSTRVNEKFLAEHFRNPETVVTLVLEFLPSLPTEVPQKFLQEYTPIREMSIQQQVTNISRFFGEQLSEKRLGPGAATFSREPPMRVKKVQAIESTLTAMEVDEDAVQKLSEEEFQRKEEATKKLRETMERAKGEQTVIEKMKERAKTLKLQEITKPLPRNLKEKFLTDAVRRILNSERQCIKGGVSSKRRKLVTVIAATFPDNVRYGIMEFILEDIKQRIDLAFSWLFEEYSLLQGFTRHTYVKTENRPDHAYNELLNKLIFGIGERCDHKDKIILIRRVYLEAPILPEVSIGHLVQLSLDDEFSQHGLELIKDLAVLRPPRKNRFVRVLLNFSVHERLDLRDLAQAHLVSLYHVHKILPARIDEFALEWLKFIEQESPPAAVFSQDFGRPTEEPDWREDTTKVCFGLAFTLLPYKPEVYLQQICQVFVSTSAELKRTILRSLDIPIKKMGVESPTLLQLIEDCPKGMETLVIRIIYILTERVPSPHEELVRRVRDLYQNKVKDVRVMIPVLSGLTRSELISVLPKLIKLNPAVVKEVFNRLLGIGAEFAHQTMAMTPTDILVALHTIDTSVCDIKAIVKATSLCLAERDLYTQEVLMAVLQQLVEVTPLPTLMMRTTIQSLTLYPRLANFVMNLLQRLIIKQVWRQKVIWEGFLKTVQRLKPQSMPILLHLPPAQLVDALQQCPDLRPALSEYAESMQDEPMNGSGITQQVLDIISGKSVDVFVTDESGGYISAEHIKKEAPDPSEISVISTVPVLTSLVPLPVPPPIGSDLNQPLPPGED</sequence>
<evidence type="ECO:0000256" key="1">
    <source>
        <dbReference type="SAM" id="MobiDB-lite"/>
    </source>
</evidence>
<evidence type="ECO:0000269" key="2">
    <source>
    </source>
</evidence>
<evidence type="ECO:0000269" key="3">
    <source>
    </source>
</evidence>
<evidence type="ECO:0000269" key="4">
    <source>
    </source>
</evidence>
<evidence type="ECO:0000269" key="5">
    <source>
    </source>
</evidence>
<evidence type="ECO:0000269" key="6">
    <source>
    </source>
</evidence>
<evidence type="ECO:0000269" key="7">
    <source>
    </source>
</evidence>
<evidence type="ECO:0000305" key="8"/>
<evidence type="ECO:0000312" key="9">
    <source>
        <dbReference type="EMBL" id="AAF51962.2"/>
    </source>
</evidence>
<evidence type="ECO:0000312" key="10">
    <source>
        <dbReference type="EMBL" id="AAM49961.1"/>
    </source>
</evidence>
<evidence type="ECO:0000312" key="11">
    <source>
        <dbReference type="FlyBase" id="FBgn0037371"/>
    </source>
</evidence>
<evidence type="ECO:0000312" key="12">
    <source>
        <dbReference type="PDB" id="3GS3"/>
    </source>
</evidence>
<evidence type="ECO:0000312" key="13">
    <source>
        <dbReference type="Proteomes" id="UP000000803"/>
    </source>
</evidence>
<evidence type="ECO:0007829" key="14">
    <source>
        <dbReference type="PDB" id="3GS3"/>
    </source>
</evidence>
<evidence type="ECO:0007829" key="15">
    <source>
        <dbReference type="PDB" id="4IMI"/>
    </source>
</evidence>
<evidence type="ECO:0007829" key="16">
    <source>
        <dbReference type="PDB" id="4IMJ"/>
    </source>
</evidence>
<gene>
    <name evidence="11" type="primary">Sym</name>
    <name evidence="11" type="ORF">CG2097</name>
</gene>
<reference evidence="9" key="1">
    <citation type="journal article" date="2000" name="Science">
        <title>The genome sequence of Drosophila melanogaster.</title>
        <authorList>
            <person name="Adams M.D."/>
            <person name="Celniker S.E."/>
            <person name="Holt R.A."/>
            <person name="Evans C.A."/>
            <person name="Gocayne J.D."/>
            <person name="Amanatides P.G."/>
            <person name="Scherer S.E."/>
            <person name="Li P.W."/>
            <person name="Hoskins R.A."/>
            <person name="Galle R.F."/>
            <person name="George R.A."/>
            <person name="Lewis S.E."/>
            <person name="Richards S."/>
            <person name="Ashburner M."/>
            <person name="Henderson S.N."/>
            <person name="Sutton G.G."/>
            <person name="Wortman J.R."/>
            <person name="Yandell M.D."/>
            <person name="Zhang Q."/>
            <person name="Chen L.X."/>
            <person name="Brandon R.C."/>
            <person name="Rogers Y.-H.C."/>
            <person name="Blazej R.G."/>
            <person name="Champe M."/>
            <person name="Pfeiffer B.D."/>
            <person name="Wan K.H."/>
            <person name="Doyle C."/>
            <person name="Baxter E.G."/>
            <person name="Helt G."/>
            <person name="Nelson C.R."/>
            <person name="Miklos G.L.G."/>
            <person name="Abril J.F."/>
            <person name="Agbayani A."/>
            <person name="An H.-J."/>
            <person name="Andrews-Pfannkoch C."/>
            <person name="Baldwin D."/>
            <person name="Ballew R.M."/>
            <person name="Basu A."/>
            <person name="Baxendale J."/>
            <person name="Bayraktaroglu L."/>
            <person name="Beasley E.M."/>
            <person name="Beeson K.Y."/>
            <person name="Benos P.V."/>
            <person name="Berman B.P."/>
            <person name="Bhandari D."/>
            <person name="Bolshakov S."/>
            <person name="Borkova D."/>
            <person name="Botchan M.R."/>
            <person name="Bouck J."/>
            <person name="Brokstein P."/>
            <person name="Brottier P."/>
            <person name="Burtis K.C."/>
            <person name="Busam D.A."/>
            <person name="Butler H."/>
            <person name="Cadieu E."/>
            <person name="Center A."/>
            <person name="Chandra I."/>
            <person name="Cherry J.M."/>
            <person name="Cawley S."/>
            <person name="Dahlke C."/>
            <person name="Davenport L.B."/>
            <person name="Davies P."/>
            <person name="de Pablos B."/>
            <person name="Delcher A."/>
            <person name="Deng Z."/>
            <person name="Mays A.D."/>
            <person name="Dew I."/>
            <person name="Dietz S.M."/>
            <person name="Dodson K."/>
            <person name="Doup L.E."/>
            <person name="Downes M."/>
            <person name="Dugan-Rocha S."/>
            <person name="Dunkov B.C."/>
            <person name="Dunn P."/>
            <person name="Durbin K.J."/>
            <person name="Evangelista C.C."/>
            <person name="Ferraz C."/>
            <person name="Ferriera S."/>
            <person name="Fleischmann W."/>
            <person name="Fosler C."/>
            <person name="Gabrielian A.E."/>
            <person name="Garg N.S."/>
            <person name="Gelbart W.M."/>
            <person name="Glasser K."/>
            <person name="Glodek A."/>
            <person name="Gong F."/>
            <person name="Gorrell J.H."/>
            <person name="Gu Z."/>
            <person name="Guan P."/>
            <person name="Harris M."/>
            <person name="Harris N.L."/>
            <person name="Harvey D.A."/>
            <person name="Heiman T.J."/>
            <person name="Hernandez J.R."/>
            <person name="Houck J."/>
            <person name="Hostin D."/>
            <person name="Houston K.A."/>
            <person name="Howland T.J."/>
            <person name="Wei M.-H."/>
            <person name="Ibegwam C."/>
            <person name="Jalali M."/>
            <person name="Kalush F."/>
            <person name="Karpen G.H."/>
            <person name="Ke Z."/>
            <person name="Kennison J.A."/>
            <person name="Ketchum K.A."/>
            <person name="Kimmel B.E."/>
            <person name="Kodira C.D."/>
            <person name="Kraft C.L."/>
            <person name="Kravitz S."/>
            <person name="Kulp D."/>
            <person name="Lai Z."/>
            <person name="Lasko P."/>
            <person name="Lei Y."/>
            <person name="Levitsky A.A."/>
            <person name="Li J.H."/>
            <person name="Li Z."/>
            <person name="Liang Y."/>
            <person name="Lin X."/>
            <person name="Liu X."/>
            <person name="Mattei B."/>
            <person name="McIntosh T.C."/>
            <person name="McLeod M.P."/>
            <person name="McPherson D."/>
            <person name="Merkulov G."/>
            <person name="Milshina N.V."/>
            <person name="Mobarry C."/>
            <person name="Morris J."/>
            <person name="Moshrefi A."/>
            <person name="Mount S.M."/>
            <person name="Moy M."/>
            <person name="Murphy B."/>
            <person name="Murphy L."/>
            <person name="Muzny D.M."/>
            <person name="Nelson D.L."/>
            <person name="Nelson D.R."/>
            <person name="Nelson K.A."/>
            <person name="Nixon K."/>
            <person name="Nusskern D.R."/>
            <person name="Pacleb J.M."/>
            <person name="Palazzolo M."/>
            <person name="Pittman G.S."/>
            <person name="Pan S."/>
            <person name="Pollard J."/>
            <person name="Puri V."/>
            <person name="Reese M.G."/>
            <person name="Reinert K."/>
            <person name="Remington K."/>
            <person name="Saunders R.D.C."/>
            <person name="Scheeler F."/>
            <person name="Shen H."/>
            <person name="Shue B.C."/>
            <person name="Siden-Kiamos I."/>
            <person name="Simpson M."/>
            <person name="Skupski M.P."/>
            <person name="Smith T.J."/>
            <person name="Spier E."/>
            <person name="Spradling A.C."/>
            <person name="Stapleton M."/>
            <person name="Strong R."/>
            <person name="Sun E."/>
            <person name="Svirskas R."/>
            <person name="Tector C."/>
            <person name="Turner R."/>
            <person name="Venter E."/>
            <person name="Wang A.H."/>
            <person name="Wang X."/>
            <person name="Wang Z.-Y."/>
            <person name="Wassarman D.A."/>
            <person name="Weinstock G.M."/>
            <person name="Weissenbach J."/>
            <person name="Williams S.M."/>
            <person name="Woodage T."/>
            <person name="Worley K.C."/>
            <person name="Wu D."/>
            <person name="Yang S."/>
            <person name="Yao Q.A."/>
            <person name="Ye J."/>
            <person name="Yeh R.-F."/>
            <person name="Zaveri J.S."/>
            <person name="Zhan M."/>
            <person name="Zhang G."/>
            <person name="Zhao Q."/>
            <person name="Zheng L."/>
            <person name="Zheng X.H."/>
            <person name="Zhong F.N."/>
            <person name="Zhong W."/>
            <person name="Zhou X."/>
            <person name="Zhu S.C."/>
            <person name="Zhu X."/>
            <person name="Smith H.O."/>
            <person name="Gibbs R.A."/>
            <person name="Myers E.W."/>
            <person name="Rubin G.M."/>
            <person name="Venter J.C."/>
        </authorList>
    </citation>
    <scope>NUCLEOTIDE SEQUENCE [LARGE SCALE GENOMIC DNA]</scope>
    <source>
        <strain>Berkeley</strain>
    </source>
</reference>
<reference evidence="9" key="2">
    <citation type="journal article" date="2002" name="Genome Biol.">
        <title>Annotation of the Drosophila melanogaster euchromatic genome: a systematic review.</title>
        <authorList>
            <person name="Misra S."/>
            <person name="Crosby M.A."/>
            <person name="Mungall C.J."/>
            <person name="Matthews B.B."/>
            <person name="Campbell K.S."/>
            <person name="Hradecky P."/>
            <person name="Huang Y."/>
            <person name="Kaminker J.S."/>
            <person name="Millburn G.H."/>
            <person name="Prochnik S.E."/>
            <person name="Smith C.D."/>
            <person name="Tupy J.L."/>
            <person name="Whitfield E.J."/>
            <person name="Bayraktaroglu L."/>
            <person name="Berman B.P."/>
            <person name="Bettencourt B.R."/>
            <person name="Celniker S.E."/>
            <person name="de Grey A.D.N.J."/>
            <person name="Drysdale R.A."/>
            <person name="Harris N.L."/>
            <person name="Richter J."/>
            <person name="Russo S."/>
            <person name="Schroeder A.J."/>
            <person name="Shu S.Q."/>
            <person name="Stapleton M."/>
            <person name="Yamada C."/>
            <person name="Ashburner M."/>
            <person name="Gelbart W.M."/>
            <person name="Rubin G.M."/>
            <person name="Lewis S.E."/>
        </authorList>
    </citation>
    <scope>GENOME REANNOTATION</scope>
    <source>
        <strain>Berkeley</strain>
    </source>
</reference>
<reference evidence="10" key="3">
    <citation type="journal article" date="2002" name="Genome Biol.">
        <title>A Drosophila full-length cDNA resource.</title>
        <authorList>
            <person name="Stapleton M."/>
            <person name="Carlson J.W."/>
            <person name="Brokstein P."/>
            <person name="Yu C."/>
            <person name="Champe M."/>
            <person name="George R.A."/>
            <person name="Guarin H."/>
            <person name="Kronmiller B."/>
            <person name="Pacleb J.M."/>
            <person name="Park S."/>
            <person name="Wan K.H."/>
            <person name="Rubin G.M."/>
            <person name="Celniker S.E."/>
        </authorList>
    </citation>
    <scope>NUCLEOTIDE SEQUENCE [LARGE SCALE MRNA]</scope>
    <source>
        <strain evidence="2">Berkeley</strain>
        <tissue evidence="2">Embryo</tissue>
    </source>
</reference>
<reference evidence="8" key="4">
    <citation type="journal article" date="2007" name="Mol. Cell">
        <title>A genome-wide RNA interference screen reveals that variant histones are necessary for replication-dependent histone pre-mRNA processing.</title>
        <authorList>
            <person name="Wagner E.J."/>
            <person name="Burch B.D."/>
            <person name="Godfrey A.C."/>
            <person name="Salzler H.R."/>
            <person name="Duronio R.J."/>
            <person name="Marzluff W.F."/>
        </authorList>
    </citation>
    <scope>FUNCTION</scope>
    <scope>SUBCELLULAR LOCATION</scope>
</reference>
<reference evidence="8" key="5">
    <citation type="journal article" date="2009" name="Mol. Cell">
        <title>A core complex of CPSF73, CPSF100, and Symplekin may form two different cleavage factors for processing of poly(A) and histone mRNAs.</title>
        <authorList>
            <person name="Sullivan K.D."/>
            <person name="Steiniger M."/>
            <person name="Marzluff W.F."/>
        </authorList>
    </citation>
    <scope>FUNCTION</scope>
    <scope>INTERACTION WITH CPSF73; CPSF100; SLBP AND LSM11</scope>
</reference>
<reference key="6">
    <citation type="journal article" date="2017" name="J. Genet. Genomics">
        <title>Regulators of alternative polyadenylation operate at the transition from mitosis to meiosis.</title>
        <authorList>
            <person name="Shan L."/>
            <person name="Wu C."/>
            <person name="Chen D."/>
            <person name="Hou L."/>
            <person name="Li X."/>
            <person name="Wang L."/>
            <person name="Chu X."/>
            <person name="Hou Y."/>
            <person name="Wang Z."/>
        </authorList>
    </citation>
    <scope>FUNCTION</scope>
    <scope>DISRUPTION PHENOTYPE</scope>
</reference>
<reference key="7">
    <citation type="journal article" date="2018" name="RNA">
        <title>Dicer-2 promotes mRNA activation through cytoplasmic polyadenylation.</title>
        <authorList>
            <person name="Coll O."/>
            <person name="Guitart T."/>
            <person name="Villalba A."/>
            <person name="Papin C."/>
            <person name="Simonelig M."/>
            <person name="Gebauer F."/>
        </authorList>
    </citation>
    <scope>DEVELOPMENTAL STAGE</scope>
</reference>
<reference evidence="8 12" key="8">
    <citation type="journal article" date="2009" name="J. Mol. Biol.">
        <title>Crystal structure of the HEAT domain from the Pre-mRNA processing factor Symplekin.</title>
        <authorList>
            <person name="Kennedy S.A."/>
            <person name="Frazier M.L."/>
            <person name="Steiniger M."/>
            <person name="Mast A.M."/>
            <person name="Marzluff W.F."/>
            <person name="Redinbo M.R."/>
        </authorList>
    </citation>
    <scope>X-RAY CRYSTALLOGRAPHY (2.40 ANGSTROMS) OF 19-270</scope>
    <scope>HEAT REPEATS</scope>
</reference>
<organism evidence="13">
    <name type="scientific">Drosophila melanogaster</name>
    <name type="common">Fruit fly</name>
    <dbReference type="NCBI Taxonomy" id="7227"/>
    <lineage>
        <taxon>Eukaryota</taxon>
        <taxon>Metazoa</taxon>
        <taxon>Ecdysozoa</taxon>
        <taxon>Arthropoda</taxon>
        <taxon>Hexapoda</taxon>
        <taxon>Insecta</taxon>
        <taxon>Pterygota</taxon>
        <taxon>Neoptera</taxon>
        <taxon>Endopterygota</taxon>
        <taxon>Diptera</taxon>
        <taxon>Brachycera</taxon>
        <taxon>Muscomorpha</taxon>
        <taxon>Ephydroidea</taxon>
        <taxon>Drosophilidae</taxon>
        <taxon>Drosophila</taxon>
        <taxon>Sophophora</taxon>
    </lineage>
</organism>
<dbReference type="EMBL" id="AE014297">
    <property type="protein sequence ID" value="AAF51962.2"/>
    <property type="molecule type" value="Genomic_DNA"/>
</dbReference>
<dbReference type="EMBL" id="AY118592">
    <property type="protein sequence ID" value="AAM49961.1"/>
    <property type="molecule type" value="mRNA"/>
</dbReference>
<dbReference type="RefSeq" id="NP_649580.1">
    <property type="nucleotide sequence ID" value="NM_141323.2"/>
</dbReference>
<dbReference type="PDB" id="3GS3">
    <property type="method" value="X-ray"/>
    <property type="resolution" value="2.40 A"/>
    <property type="chains" value="A=19-270"/>
</dbReference>
<dbReference type="PDB" id="4IMI">
    <property type="method" value="X-ray"/>
    <property type="resolution" value="2.35 A"/>
    <property type="chains" value="A/C=19-351"/>
</dbReference>
<dbReference type="PDB" id="4IMJ">
    <property type="method" value="X-ray"/>
    <property type="resolution" value="2.58 A"/>
    <property type="chains" value="A/C=19-351"/>
</dbReference>
<dbReference type="PDB" id="4YGX">
    <property type="method" value="X-ray"/>
    <property type="resolution" value="2.95 A"/>
    <property type="chains" value="A/C=19-351"/>
</dbReference>
<dbReference type="PDB" id="6NPW">
    <property type="method" value="X-ray"/>
    <property type="resolution" value="2.49 A"/>
    <property type="chains" value="A/C=19-351"/>
</dbReference>
<dbReference type="PDBsum" id="3GS3"/>
<dbReference type="PDBsum" id="4IMI"/>
<dbReference type="PDBsum" id="4IMJ"/>
<dbReference type="PDBsum" id="4YGX"/>
<dbReference type="PDBsum" id="6NPW"/>
<dbReference type="SMR" id="Q8MSU4"/>
<dbReference type="BioGRID" id="65914">
    <property type="interactions" value="13"/>
</dbReference>
<dbReference type="ComplexPortal" id="CPX-2768">
    <property type="entry name" value="Histone pre-RNA core cleavage complex"/>
</dbReference>
<dbReference type="FunCoup" id="Q8MSU4">
    <property type="interactions" value="2294"/>
</dbReference>
<dbReference type="IntAct" id="Q8MSU4">
    <property type="interactions" value="14"/>
</dbReference>
<dbReference type="STRING" id="7227.FBpp0078372"/>
<dbReference type="PaxDb" id="7227-FBpp0078372"/>
<dbReference type="DNASU" id="40709"/>
<dbReference type="EnsemblMetazoa" id="FBtr0078723">
    <property type="protein sequence ID" value="FBpp0078372"/>
    <property type="gene ID" value="FBgn0037371"/>
</dbReference>
<dbReference type="GeneID" id="40709"/>
<dbReference type="KEGG" id="dme:Dmel_CG2097"/>
<dbReference type="UCSC" id="CG2097-RA">
    <property type="organism name" value="d. melanogaster"/>
</dbReference>
<dbReference type="AGR" id="FB:FBgn0037371"/>
<dbReference type="CTD" id="40709"/>
<dbReference type="FlyBase" id="FBgn0037371">
    <property type="gene designation" value="Sym"/>
</dbReference>
<dbReference type="VEuPathDB" id="VectorBase:FBgn0037371"/>
<dbReference type="eggNOG" id="KOG1895">
    <property type="taxonomic scope" value="Eukaryota"/>
</dbReference>
<dbReference type="GeneTree" id="ENSGT00390000017045"/>
<dbReference type="HOGENOM" id="CLU_004756_0_0_1"/>
<dbReference type="InParanoid" id="Q8MSU4"/>
<dbReference type="OMA" id="NVRYGIM"/>
<dbReference type="OrthoDB" id="331600at2759"/>
<dbReference type="PhylomeDB" id="Q8MSU4"/>
<dbReference type="Reactome" id="R-DME-159231">
    <property type="pathway name" value="Transport of Mature mRNA Derived from an Intronless Transcript"/>
</dbReference>
<dbReference type="Reactome" id="R-DME-72187">
    <property type="pathway name" value="mRNA 3'-end processing"/>
</dbReference>
<dbReference type="Reactome" id="R-DME-72203">
    <property type="pathway name" value="Processing of Capped Intron-Containing Pre-mRNA"/>
</dbReference>
<dbReference type="Reactome" id="R-DME-73856">
    <property type="pathway name" value="RNA Polymerase II Transcription Termination"/>
</dbReference>
<dbReference type="Reactome" id="R-DME-77595">
    <property type="pathway name" value="Processing of Intronless Pre-mRNAs"/>
</dbReference>
<dbReference type="SignaLink" id="Q8MSU4"/>
<dbReference type="BioGRID-ORCS" id="40709">
    <property type="hits" value="0 hits in 1 CRISPR screen"/>
</dbReference>
<dbReference type="EvolutionaryTrace" id="Q8MSU4"/>
<dbReference type="GenomeRNAi" id="40709"/>
<dbReference type="PRO" id="PR:Q8MSU4"/>
<dbReference type="Proteomes" id="UP000000803">
    <property type="component" value="Chromosome 3R"/>
</dbReference>
<dbReference type="Bgee" id="FBgn0037371">
    <property type="expression patterns" value="Expressed in egg chamber and 36 other cell types or tissues"/>
</dbReference>
<dbReference type="GO" id="GO:0035363">
    <property type="term" value="C:histone locus body"/>
    <property type="evidence" value="ECO:0000314"/>
    <property type="project" value="UniProtKB"/>
</dbReference>
<dbReference type="GO" id="GO:0005847">
    <property type="term" value="C:mRNA cleavage and polyadenylation specificity factor complex"/>
    <property type="evidence" value="ECO:0000314"/>
    <property type="project" value="FlyBase"/>
</dbReference>
<dbReference type="GO" id="GO:0005634">
    <property type="term" value="C:nucleus"/>
    <property type="evidence" value="ECO:0000314"/>
    <property type="project" value="FlyBase"/>
</dbReference>
<dbReference type="GO" id="GO:0061689">
    <property type="term" value="C:tricellular tight junction"/>
    <property type="evidence" value="ECO:0000314"/>
    <property type="project" value="FlyBase"/>
</dbReference>
<dbReference type="GO" id="GO:0003723">
    <property type="term" value="F:RNA binding"/>
    <property type="evidence" value="ECO:0007669"/>
    <property type="project" value="UniProtKB-KW"/>
</dbReference>
<dbReference type="GO" id="GO:0180010">
    <property type="term" value="P:co-transcriptional mRNA 3'-end processing, cleavage and polyadenylation pathway"/>
    <property type="evidence" value="ECO:0000315"/>
    <property type="project" value="FlyBase"/>
</dbReference>
<dbReference type="GO" id="GO:0006398">
    <property type="term" value="P:mRNA 3'-end processing by stem-loop binding and cleavage"/>
    <property type="evidence" value="ECO:0000315"/>
    <property type="project" value="FlyBase"/>
</dbReference>
<dbReference type="Gene3D" id="1.25.10.10">
    <property type="entry name" value="Leucine-rich Repeat Variant"/>
    <property type="match status" value="1"/>
</dbReference>
<dbReference type="InterPro" id="IPR011989">
    <property type="entry name" value="ARM-like"/>
</dbReference>
<dbReference type="InterPro" id="IPR016024">
    <property type="entry name" value="ARM-type_fold"/>
</dbReference>
<dbReference type="InterPro" id="IPR021850">
    <property type="entry name" value="Symplekin/Pta1"/>
</dbReference>
<dbReference type="InterPro" id="IPR032460">
    <property type="entry name" value="Symplekin/Pta1_N"/>
</dbReference>
<dbReference type="InterPro" id="IPR022075">
    <property type="entry name" value="Symplekin_C"/>
</dbReference>
<dbReference type="PANTHER" id="PTHR15245:SF20">
    <property type="entry name" value="SYMPLEKIN"/>
    <property type="match status" value="1"/>
</dbReference>
<dbReference type="PANTHER" id="PTHR15245">
    <property type="entry name" value="SYMPLEKIN-RELATED"/>
    <property type="match status" value="1"/>
</dbReference>
<dbReference type="Pfam" id="PF11935">
    <property type="entry name" value="SYMPK_PTA1_N"/>
    <property type="match status" value="1"/>
</dbReference>
<dbReference type="Pfam" id="PF12295">
    <property type="entry name" value="Symplekin_C"/>
    <property type="match status" value="1"/>
</dbReference>
<dbReference type="SUPFAM" id="SSF48371">
    <property type="entry name" value="ARM repeat"/>
    <property type="match status" value="2"/>
</dbReference>
<name>SYMPK_DROME</name>
<feature type="chain" id="PRO_0000421978" description="Symplekin">
    <location>
        <begin position="1"/>
        <end position="1165"/>
    </location>
</feature>
<feature type="repeat" description="HEAT 1" evidence="5">
    <location>
        <begin position="23"/>
        <end position="58"/>
    </location>
</feature>
<feature type="repeat" description="HEAT 2" evidence="5">
    <location>
        <begin position="61"/>
        <end position="95"/>
    </location>
</feature>
<feature type="repeat" description="HEAT 3" evidence="5">
    <location>
        <begin position="98"/>
        <end position="140"/>
    </location>
</feature>
<feature type="repeat" description="HEAT 4" evidence="5">
    <location>
        <begin position="147"/>
        <end position="186"/>
    </location>
</feature>
<feature type="repeat" description="HEAT 5" evidence="5">
    <location>
        <begin position="218"/>
        <end position="257"/>
    </location>
</feature>
<feature type="region of interest" description="Disordered" evidence="1">
    <location>
        <begin position="365"/>
        <end position="384"/>
    </location>
</feature>
<feature type="compositionally biased region" description="Basic and acidic residues" evidence="1">
    <location>
        <begin position="367"/>
        <end position="384"/>
    </location>
</feature>
<feature type="helix" evidence="15">
    <location>
        <begin position="22"/>
        <end position="37"/>
    </location>
</feature>
<feature type="helix" evidence="15">
    <location>
        <begin position="42"/>
        <end position="56"/>
    </location>
</feature>
<feature type="turn" evidence="15">
    <location>
        <begin position="57"/>
        <end position="60"/>
    </location>
</feature>
<feature type="helix" evidence="15">
    <location>
        <begin position="61"/>
        <end position="67"/>
    </location>
</feature>
<feature type="helix" evidence="15">
    <location>
        <begin position="68"/>
        <end position="72"/>
    </location>
</feature>
<feature type="helix" evidence="15">
    <location>
        <begin position="73"/>
        <end position="75"/>
    </location>
</feature>
<feature type="helix" evidence="15">
    <location>
        <begin position="80"/>
        <end position="96"/>
    </location>
</feature>
<feature type="helix" evidence="15">
    <location>
        <begin position="98"/>
        <end position="103"/>
    </location>
</feature>
<feature type="helix" evidence="15">
    <location>
        <begin position="105"/>
        <end position="111"/>
    </location>
</feature>
<feature type="helix" evidence="15">
    <location>
        <begin position="117"/>
        <end position="140"/>
    </location>
</feature>
<feature type="strand" evidence="14">
    <location>
        <begin position="141"/>
        <end position="143"/>
    </location>
</feature>
<feature type="helix" evidence="15">
    <location>
        <begin position="146"/>
        <end position="164"/>
    </location>
</feature>
<feature type="helix" evidence="15">
    <location>
        <begin position="165"/>
        <end position="167"/>
    </location>
</feature>
<feature type="helix" evidence="15">
    <location>
        <begin position="171"/>
        <end position="187"/>
    </location>
</feature>
<feature type="strand" evidence="16">
    <location>
        <begin position="193"/>
        <end position="195"/>
    </location>
</feature>
<feature type="helix" evidence="15">
    <location>
        <begin position="204"/>
        <end position="206"/>
    </location>
</feature>
<feature type="helix" evidence="15">
    <location>
        <begin position="216"/>
        <end position="234"/>
    </location>
</feature>
<feature type="helix" evidence="15">
    <location>
        <begin position="241"/>
        <end position="257"/>
    </location>
</feature>
<feature type="helix" evidence="15">
    <location>
        <begin position="259"/>
        <end position="261"/>
    </location>
</feature>
<feature type="helix" evidence="15">
    <location>
        <begin position="262"/>
        <end position="274"/>
    </location>
</feature>
<feature type="helix" evidence="15">
    <location>
        <begin position="282"/>
        <end position="300"/>
    </location>
</feature>
<feature type="helix" evidence="15">
    <location>
        <begin position="303"/>
        <end position="308"/>
    </location>
</feature>
<feature type="helix" evidence="15">
    <location>
        <begin position="309"/>
        <end position="318"/>
    </location>
</feature>
<feature type="helix" evidence="15">
    <location>
        <begin position="323"/>
        <end position="327"/>
    </location>
</feature>
<feature type="helix" evidence="15">
    <location>
        <begin position="335"/>
        <end position="348"/>
    </location>
</feature>